<gene>
    <name type="primary">mecR1</name>
    <name type="synonym">mecR</name>
    <name type="ordered locus">SAV0042</name>
</gene>
<dbReference type="EMBL" id="BA000017">
    <property type="protein sequence ID" value="BAB56204.1"/>
    <property type="molecule type" value="Genomic_DNA"/>
</dbReference>
<dbReference type="RefSeq" id="WP_000952923.1">
    <property type="nucleotide sequence ID" value="NG_051163.1"/>
</dbReference>
<dbReference type="SMR" id="P0A0A9"/>
<dbReference type="MEROPS" id="M56.002"/>
<dbReference type="KEGG" id="sav:SAV0042"/>
<dbReference type="HOGENOM" id="CLU_035412_0_2_9"/>
<dbReference type="PhylomeDB" id="P0A0A9"/>
<dbReference type="Proteomes" id="UP000002481">
    <property type="component" value="Chromosome"/>
</dbReference>
<dbReference type="GO" id="GO:0008658">
    <property type="term" value="F:penicillin binding"/>
    <property type="evidence" value="ECO:0007669"/>
    <property type="project" value="InterPro"/>
</dbReference>
<dbReference type="GO" id="GO:0046677">
    <property type="term" value="P:response to antibiotic"/>
    <property type="evidence" value="ECO:0007669"/>
    <property type="project" value="UniProtKB-KW"/>
</dbReference>
<dbReference type="CDD" id="cd07341">
    <property type="entry name" value="M56_BlaR1_MecR1_like"/>
    <property type="match status" value="1"/>
</dbReference>
<dbReference type="Gene3D" id="3.40.710.10">
    <property type="entry name" value="DD-peptidase/beta-lactamase superfamily"/>
    <property type="match status" value="1"/>
</dbReference>
<dbReference type="Gene3D" id="3.30.2010.10">
    <property type="entry name" value="Metalloproteases ('zincins'), catalytic domain"/>
    <property type="match status" value="1"/>
</dbReference>
<dbReference type="InterPro" id="IPR012338">
    <property type="entry name" value="Beta-lactam/transpept-like"/>
</dbReference>
<dbReference type="InterPro" id="IPR052173">
    <property type="entry name" value="Beta-lactam_resp_regulator"/>
</dbReference>
<dbReference type="InterPro" id="IPR001460">
    <property type="entry name" value="PCN-bd_Tpept"/>
</dbReference>
<dbReference type="InterPro" id="IPR008756">
    <property type="entry name" value="Peptidase_M56"/>
</dbReference>
<dbReference type="NCBIfam" id="NF000326">
    <property type="entry name" value="blaR1_generic"/>
    <property type="match status" value="1"/>
</dbReference>
<dbReference type="NCBIfam" id="NF033109">
    <property type="entry name" value="sensor_MecR1"/>
    <property type="match status" value="1"/>
</dbReference>
<dbReference type="PANTHER" id="PTHR34978">
    <property type="entry name" value="POSSIBLE SENSOR-TRANSDUCER PROTEIN BLAR"/>
    <property type="match status" value="1"/>
</dbReference>
<dbReference type="PANTHER" id="PTHR34978:SF3">
    <property type="entry name" value="SLR0241 PROTEIN"/>
    <property type="match status" value="1"/>
</dbReference>
<dbReference type="Pfam" id="PF05569">
    <property type="entry name" value="Peptidase_M56"/>
    <property type="match status" value="1"/>
</dbReference>
<dbReference type="Pfam" id="PF00905">
    <property type="entry name" value="Transpeptidase"/>
    <property type="match status" value="1"/>
</dbReference>
<dbReference type="SUPFAM" id="SSF56601">
    <property type="entry name" value="beta-lactamase/transpeptidase-like"/>
    <property type="match status" value="1"/>
</dbReference>
<proteinExistence type="inferred from homology"/>
<feature type="chain" id="PRO_0000096349" description="Methicillin resistance mecR1 protein">
    <location>
        <begin position="1"/>
        <end position="585"/>
    </location>
</feature>
<feature type="region of interest" description="Beta-lactamase-like">
    <location>
        <begin position="351"/>
        <end position="585"/>
    </location>
</feature>
<evidence type="ECO:0000250" key="1"/>
<evidence type="ECO:0000305" key="2"/>
<sequence length="585" mass="68503">MLSSFLMLSIISSLLTICVIFLVRMLYIKYTQNIMSHKIWLLVLVSTLIPLIPFYKISNFTFSKDMMNRNVSDTTSSVSHMLDGQQSSVTKDLAINVNQFETSNITYMILLIWVFGSLLCLFYMIKAFRQIDVIKSSSLESSYLNERLKVCQSKMQFYKKHITISYSSNIDNPMVFGLVKSQIVLPTVVVETMNDKEIEYIILHELSHVKSHDLIFNQLYVVFKMIFWFNPALYISKTMMDNDCEKVCDRNVLKILNRHEHIRYGESILKCSILKSQHINNVAAQYLLGFNSNIKERVKYIALYDSMPKPNRNKRIVAYIVCSISLLIQAPLLSAHVQQDKYETNVSYKKLNQLAPYFKGFDGSFVLYNEREQAYSIYNEPESKQRYSPNSTYKIYLALMAFDQNLLSLNHTEQQWDKHQYPFKEWNQDQNLNSSMKYSVNWYYENLNKHLRQDEVKSYLDLIEYGNEEISGNENYWNESSLKISAIEQVNLLKNMKQHNMHFDNKAIEKVENSMTLKQKDTYKYVGKTGTGIVNHKEANGWFVGYVETKDNTYYFATHLKGEDNANGEKAQQISERILKEMELI</sequence>
<accession>P0A0A9</accession>
<accession>P26597</accession>
<accession>P72353</accession>
<reference key="1">
    <citation type="journal article" date="2001" name="Lancet">
        <title>Whole genome sequencing of meticillin-resistant Staphylococcus aureus.</title>
        <authorList>
            <person name="Kuroda M."/>
            <person name="Ohta T."/>
            <person name="Uchiyama I."/>
            <person name="Baba T."/>
            <person name="Yuzawa H."/>
            <person name="Kobayashi I."/>
            <person name="Cui L."/>
            <person name="Oguchi A."/>
            <person name="Aoki K."/>
            <person name="Nagai Y."/>
            <person name="Lian J.-Q."/>
            <person name="Ito T."/>
            <person name="Kanamori M."/>
            <person name="Matsumaru H."/>
            <person name="Maruyama A."/>
            <person name="Murakami H."/>
            <person name="Hosoyama A."/>
            <person name="Mizutani-Ui Y."/>
            <person name="Takahashi N.K."/>
            <person name="Sawano T."/>
            <person name="Inoue R."/>
            <person name="Kaito C."/>
            <person name="Sekimizu K."/>
            <person name="Hirakawa H."/>
            <person name="Kuhara S."/>
            <person name="Goto S."/>
            <person name="Yabuzaki J."/>
            <person name="Kanehisa M."/>
            <person name="Yamashita A."/>
            <person name="Oshima K."/>
            <person name="Furuya K."/>
            <person name="Yoshino C."/>
            <person name="Shiba T."/>
            <person name="Hattori M."/>
            <person name="Ogasawara N."/>
            <person name="Hayashi H."/>
            <person name="Hiramatsu K."/>
        </authorList>
    </citation>
    <scope>NUCLEOTIDE SEQUENCE [LARGE SCALE GENOMIC DNA]</scope>
    <source>
        <strain>Mu50 / ATCC 700699</strain>
    </source>
</reference>
<comment type="function">
    <text evidence="1">Penicillin-interactive protein and potential antirepressor.</text>
</comment>
<comment type="similarity">
    <text evidence="2">Belongs to the peptidase M56 family.</text>
</comment>
<keyword id="KW-0046">Antibiotic resistance</keyword>
<protein>
    <recommendedName>
        <fullName>Methicillin resistance mecR1 protein</fullName>
    </recommendedName>
</protein>
<organism>
    <name type="scientific">Staphylococcus aureus (strain Mu50 / ATCC 700699)</name>
    <dbReference type="NCBI Taxonomy" id="158878"/>
    <lineage>
        <taxon>Bacteria</taxon>
        <taxon>Bacillati</taxon>
        <taxon>Bacillota</taxon>
        <taxon>Bacilli</taxon>
        <taxon>Bacillales</taxon>
        <taxon>Staphylococcaceae</taxon>
        <taxon>Staphylococcus</taxon>
    </lineage>
</organism>
<name>MECR_STAAM</name>